<feature type="chain" id="PRO_0000375911" description="Uncharacterized protein YraE">
    <location>
        <begin position="1"/>
        <end position="65"/>
    </location>
</feature>
<keyword id="KW-1185">Reference proteome</keyword>
<sequence>MEYALHEVLEVQEMTAFKTLCLTKSKTMKALVSDPKLKEIMQQDVDITTRQLQEFASILSNAKQE</sequence>
<gene>
    <name type="primary">yraE</name>
    <name type="ordered locus">BSU26980</name>
</gene>
<proteinExistence type="predicted"/>
<organism>
    <name type="scientific">Bacillus subtilis (strain 168)</name>
    <dbReference type="NCBI Taxonomy" id="224308"/>
    <lineage>
        <taxon>Bacteria</taxon>
        <taxon>Bacillati</taxon>
        <taxon>Bacillota</taxon>
        <taxon>Bacilli</taxon>
        <taxon>Bacillales</taxon>
        <taxon>Bacillaceae</taxon>
        <taxon>Bacillus</taxon>
    </lineage>
</organism>
<protein>
    <recommendedName>
        <fullName>Uncharacterized protein YraE</fullName>
    </recommendedName>
</protein>
<accession>O06011</accession>
<accession>Q795Z3</accession>
<reference key="1">
    <citation type="journal article" date="1997" name="Microbiology">
        <title>A 23911 bp region of the Bacillus subtilis genome comprising genes located upstream and downstream of the lev operon.</title>
        <authorList>
            <person name="Parro V."/>
            <person name="San Roman M."/>
            <person name="Galindo I."/>
            <person name="Purnelle B."/>
            <person name="Bolotin A."/>
            <person name="Sorokin A."/>
            <person name="Mellado R.P."/>
        </authorList>
    </citation>
    <scope>NUCLEOTIDE SEQUENCE [GENOMIC DNA]</scope>
    <source>
        <strain>168</strain>
    </source>
</reference>
<reference key="2">
    <citation type="journal article" date="1997" name="Nature">
        <title>The complete genome sequence of the Gram-positive bacterium Bacillus subtilis.</title>
        <authorList>
            <person name="Kunst F."/>
            <person name="Ogasawara N."/>
            <person name="Moszer I."/>
            <person name="Albertini A.M."/>
            <person name="Alloni G."/>
            <person name="Azevedo V."/>
            <person name="Bertero M.G."/>
            <person name="Bessieres P."/>
            <person name="Bolotin A."/>
            <person name="Borchert S."/>
            <person name="Borriss R."/>
            <person name="Boursier L."/>
            <person name="Brans A."/>
            <person name="Braun M."/>
            <person name="Brignell S.C."/>
            <person name="Bron S."/>
            <person name="Brouillet S."/>
            <person name="Bruschi C.V."/>
            <person name="Caldwell B."/>
            <person name="Capuano V."/>
            <person name="Carter N.M."/>
            <person name="Choi S.-K."/>
            <person name="Codani J.-J."/>
            <person name="Connerton I.F."/>
            <person name="Cummings N.J."/>
            <person name="Daniel R.A."/>
            <person name="Denizot F."/>
            <person name="Devine K.M."/>
            <person name="Duesterhoeft A."/>
            <person name="Ehrlich S.D."/>
            <person name="Emmerson P.T."/>
            <person name="Entian K.-D."/>
            <person name="Errington J."/>
            <person name="Fabret C."/>
            <person name="Ferrari E."/>
            <person name="Foulger D."/>
            <person name="Fritz C."/>
            <person name="Fujita M."/>
            <person name="Fujita Y."/>
            <person name="Fuma S."/>
            <person name="Galizzi A."/>
            <person name="Galleron N."/>
            <person name="Ghim S.-Y."/>
            <person name="Glaser P."/>
            <person name="Goffeau A."/>
            <person name="Golightly E.J."/>
            <person name="Grandi G."/>
            <person name="Guiseppi G."/>
            <person name="Guy B.J."/>
            <person name="Haga K."/>
            <person name="Haiech J."/>
            <person name="Harwood C.R."/>
            <person name="Henaut A."/>
            <person name="Hilbert H."/>
            <person name="Holsappel S."/>
            <person name="Hosono S."/>
            <person name="Hullo M.-F."/>
            <person name="Itaya M."/>
            <person name="Jones L.-M."/>
            <person name="Joris B."/>
            <person name="Karamata D."/>
            <person name="Kasahara Y."/>
            <person name="Klaerr-Blanchard M."/>
            <person name="Klein C."/>
            <person name="Kobayashi Y."/>
            <person name="Koetter P."/>
            <person name="Koningstein G."/>
            <person name="Krogh S."/>
            <person name="Kumano M."/>
            <person name="Kurita K."/>
            <person name="Lapidus A."/>
            <person name="Lardinois S."/>
            <person name="Lauber J."/>
            <person name="Lazarevic V."/>
            <person name="Lee S.-M."/>
            <person name="Levine A."/>
            <person name="Liu H."/>
            <person name="Masuda S."/>
            <person name="Mauel C."/>
            <person name="Medigue C."/>
            <person name="Medina N."/>
            <person name="Mellado R.P."/>
            <person name="Mizuno M."/>
            <person name="Moestl D."/>
            <person name="Nakai S."/>
            <person name="Noback M."/>
            <person name="Noone D."/>
            <person name="O'Reilly M."/>
            <person name="Ogawa K."/>
            <person name="Ogiwara A."/>
            <person name="Oudega B."/>
            <person name="Park S.-H."/>
            <person name="Parro V."/>
            <person name="Pohl T.M."/>
            <person name="Portetelle D."/>
            <person name="Porwollik S."/>
            <person name="Prescott A.M."/>
            <person name="Presecan E."/>
            <person name="Pujic P."/>
            <person name="Purnelle B."/>
            <person name="Rapoport G."/>
            <person name="Rey M."/>
            <person name="Reynolds S."/>
            <person name="Rieger M."/>
            <person name="Rivolta C."/>
            <person name="Rocha E."/>
            <person name="Roche B."/>
            <person name="Rose M."/>
            <person name="Sadaie Y."/>
            <person name="Sato T."/>
            <person name="Scanlan E."/>
            <person name="Schleich S."/>
            <person name="Schroeter R."/>
            <person name="Scoffone F."/>
            <person name="Sekiguchi J."/>
            <person name="Sekowska A."/>
            <person name="Seror S.J."/>
            <person name="Serror P."/>
            <person name="Shin B.-S."/>
            <person name="Soldo B."/>
            <person name="Sorokin A."/>
            <person name="Tacconi E."/>
            <person name="Takagi T."/>
            <person name="Takahashi H."/>
            <person name="Takemaru K."/>
            <person name="Takeuchi M."/>
            <person name="Tamakoshi A."/>
            <person name="Tanaka T."/>
            <person name="Terpstra P."/>
            <person name="Tognoni A."/>
            <person name="Tosato V."/>
            <person name="Uchiyama S."/>
            <person name="Vandenbol M."/>
            <person name="Vannier F."/>
            <person name="Vassarotti A."/>
            <person name="Viari A."/>
            <person name="Wambutt R."/>
            <person name="Wedler E."/>
            <person name="Wedler H."/>
            <person name="Weitzenegger T."/>
            <person name="Winters P."/>
            <person name="Wipat A."/>
            <person name="Yamamoto H."/>
            <person name="Yamane K."/>
            <person name="Yasumoto K."/>
            <person name="Yata K."/>
            <person name="Yoshida K."/>
            <person name="Yoshikawa H.-F."/>
            <person name="Zumstein E."/>
            <person name="Yoshikawa H."/>
            <person name="Danchin A."/>
        </authorList>
    </citation>
    <scope>NUCLEOTIDE SEQUENCE [LARGE SCALE GENOMIC DNA]</scope>
    <source>
        <strain>168</strain>
    </source>
</reference>
<dbReference type="EMBL" id="X92868">
    <property type="protein sequence ID" value="CAA63471.1"/>
    <property type="molecule type" value="Genomic_DNA"/>
</dbReference>
<dbReference type="EMBL" id="AL009126">
    <property type="protein sequence ID" value="CAB14639.1"/>
    <property type="molecule type" value="Genomic_DNA"/>
</dbReference>
<dbReference type="PIR" id="E69970">
    <property type="entry name" value="E69970"/>
</dbReference>
<dbReference type="RefSeq" id="NP_390575.1">
    <property type="nucleotide sequence ID" value="NC_000964.3"/>
</dbReference>
<dbReference type="RefSeq" id="WP_003229842.1">
    <property type="nucleotide sequence ID" value="NZ_OZ025638.1"/>
</dbReference>
<dbReference type="SMR" id="O06011"/>
<dbReference type="FunCoup" id="O06011">
    <property type="interactions" value="30"/>
</dbReference>
<dbReference type="STRING" id="224308.BSU26980"/>
<dbReference type="PaxDb" id="224308-BSU26980"/>
<dbReference type="EnsemblBacteria" id="CAB14639">
    <property type="protein sequence ID" value="CAB14639"/>
    <property type="gene ID" value="BSU_26980"/>
</dbReference>
<dbReference type="GeneID" id="938108"/>
<dbReference type="KEGG" id="bsu:BSU26980"/>
<dbReference type="PATRIC" id="fig|224308.179.peg.2930"/>
<dbReference type="eggNOG" id="ENOG5033AQH">
    <property type="taxonomic scope" value="Bacteria"/>
</dbReference>
<dbReference type="InParanoid" id="O06011"/>
<dbReference type="OrthoDB" id="2356617at2"/>
<dbReference type="BioCyc" id="BSUB:BSU26980-MONOMER"/>
<dbReference type="Proteomes" id="UP000001570">
    <property type="component" value="Chromosome"/>
</dbReference>
<dbReference type="InterPro" id="IPR012851">
    <property type="entry name" value="Spore_coat_CotF-like"/>
</dbReference>
<dbReference type="PANTHER" id="PTHR39183">
    <property type="entry name" value="SPORE COAT PROTEIN F-LIKE PROTEIN YHCQ"/>
    <property type="match status" value="1"/>
</dbReference>
<dbReference type="PANTHER" id="PTHR39183:SF1">
    <property type="entry name" value="SPORE COAT PROTEIN F-LIKE PROTEIN YHCQ"/>
    <property type="match status" value="1"/>
</dbReference>
<name>YRAE_BACSU</name>